<gene>
    <name type="primary">nfrA</name>
    <name type="ordered locus">SAR0400</name>
</gene>
<organism>
    <name type="scientific">Staphylococcus aureus (strain MRSA252)</name>
    <dbReference type="NCBI Taxonomy" id="282458"/>
    <lineage>
        <taxon>Bacteria</taxon>
        <taxon>Bacillati</taxon>
        <taxon>Bacillota</taxon>
        <taxon>Bacilli</taxon>
        <taxon>Bacillales</taxon>
        <taxon>Staphylococcaceae</taxon>
        <taxon>Staphylococcus</taxon>
    </lineage>
</organism>
<proteinExistence type="inferred from homology"/>
<name>NFRA_STAAR</name>
<keyword id="KW-0285">Flavoprotein</keyword>
<keyword id="KW-0288">FMN</keyword>
<keyword id="KW-0521">NADP</keyword>
<keyword id="KW-0560">Oxidoreductase</keyword>
<reference key="1">
    <citation type="journal article" date="2004" name="Proc. Natl. Acad. Sci. U.S.A.">
        <title>Complete genomes of two clinical Staphylococcus aureus strains: evidence for the rapid evolution of virulence and drug resistance.</title>
        <authorList>
            <person name="Holden M.T.G."/>
            <person name="Feil E.J."/>
            <person name="Lindsay J.A."/>
            <person name="Peacock S.J."/>
            <person name="Day N.P.J."/>
            <person name="Enright M.C."/>
            <person name="Foster T.J."/>
            <person name="Moore C.E."/>
            <person name="Hurst L."/>
            <person name="Atkin R."/>
            <person name="Barron A."/>
            <person name="Bason N."/>
            <person name="Bentley S.D."/>
            <person name="Chillingworth C."/>
            <person name="Chillingworth T."/>
            <person name="Churcher C."/>
            <person name="Clark L."/>
            <person name="Corton C."/>
            <person name="Cronin A."/>
            <person name="Doggett J."/>
            <person name="Dowd L."/>
            <person name="Feltwell T."/>
            <person name="Hance Z."/>
            <person name="Harris B."/>
            <person name="Hauser H."/>
            <person name="Holroyd S."/>
            <person name="Jagels K."/>
            <person name="James K.D."/>
            <person name="Lennard N."/>
            <person name="Line A."/>
            <person name="Mayes R."/>
            <person name="Moule S."/>
            <person name="Mungall K."/>
            <person name="Ormond D."/>
            <person name="Quail M.A."/>
            <person name="Rabbinowitsch E."/>
            <person name="Rutherford K.M."/>
            <person name="Sanders M."/>
            <person name="Sharp S."/>
            <person name="Simmonds M."/>
            <person name="Stevens K."/>
            <person name="Whitehead S."/>
            <person name="Barrell B.G."/>
            <person name="Spratt B.G."/>
            <person name="Parkhill J."/>
        </authorList>
    </citation>
    <scope>NUCLEOTIDE SEQUENCE [LARGE SCALE GENOMIC DNA]</scope>
    <source>
        <strain>MRSA252</strain>
    </source>
</reference>
<comment type="function">
    <text evidence="1">Reduces FMN, organic nitro compounds and disulfide DTNB. Involved in maintenance of the cellular redox state and the disulfide stress response (By similarity).</text>
</comment>
<comment type="cofactor">
    <cofactor evidence="1">
        <name>FMN</name>
        <dbReference type="ChEBI" id="CHEBI:58210"/>
    </cofactor>
</comment>
<comment type="similarity">
    <text evidence="2">Belongs to the flavin oxidoreductase frp family.</text>
</comment>
<accession>Q6GJR6</accession>
<dbReference type="EC" id="1.6.-.-"/>
<dbReference type="EMBL" id="BX571856">
    <property type="protein sequence ID" value="CAG39423.1"/>
    <property type="molecule type" value="Genomic_DNA"/>
</dbReference>
<dbReference type="SMR" id="Q6GJR6"/>
<dbReference type="KEGG" id="sar:SAR0400"/>
<dbReference type="HOGENOM" id="CLU_070764_0_0_9"/>
<dbReference type="Proteomes" id="UP000000596">
    <property type="component" value="Chromosome"/>
</dbReference>
<dbReference type="GO" id="GO:0016491">
    <property type="term" value="F:oxidoreductase activity"/>
    <property type="evidence" value="ECO:0007669"/>
    <property type="project" value="UniProtKB-KW"/>
</dbReference>
<dbReference type="CDD" id="cd02146">
    <property type="entry name" value="NfsA-like"/>
    <property type="match status" value="1"/>
</dbReference>
<dbReference type="Gene3D" id="3.40.109.10">
    <property type="entry name" value="NADH Oxidase"/>
    <property type="match status" value="1"/>
</dbReference>
<dbReference type="InterPro" id="IPR016446">
    <property type="entry name" value="Flavin_OxRdtase_Frp"/>
</dbReference>
<dbReference type="InterPro" id="IPR029479">
    <property type="entry name" value="Nitroreductase"/>
</dbReference>
<dbReference type="InterPro" id="IPR000415">
    <property type="entry name" value="Nitroreductase-like"/>
</dbReference>
<dbReference type="NCBIfam" id="NF008033">
    <property type="entry name" value="PRK10765.1"/>
    <property type="match status" value="1"/>
</dbReference>
<dbReference type="PANTHER" id="PTHR43425:SF3">
    <property type="entry name" value="NADPH-DEPENDENT OXIDOREDUCTASE"/>
    <property type="match status" value="1"/>
</dbReference>
<dbReference type="PANTHER" id="PTHR43425">
    <property type="entry name" value="OXYGEN-INSENSITIVE NADPH NITROREDUCTASE"/>
    <property type="match status" value="1"/>
</dbReference>
<dbReference type="Pfam" id="PF00881">
    <property type="entry name" value="Nitroreductase"/>
    <property type="match status" value="1"/>
</dbReference>
<dbReference type="PIRSF" id="PIRSF005426">
    <property type="entry name" value="Frp"/>
    <property type="match status" value="1"/>
</dbReference>
<dbReference type="SUPFAM" id="SSF55469">
    <property type="entry name" value="FMN-dependent nitroreductase-like"/>
    <property type="match status" value="1"/>
</dbReference>
<evidence type="ECO:0000250" key="1"/>
<evidence type="ECO:0000305" key="2"/>
<protein>
    <recommendedName>
        <fullName>NADPH-dependent oxidoreductase</fullName>
        <ecNumber>1.6.-.-</ecNumber>
    </recommendedName>
</protein>
<sequence>MSDHVYNLVKKHHSVRKFKNKPLSEDVVKKLVEAGQSASTSSFLQAYSIIGIDDEQIKENLREVSGQPYVVENGYLFVFVIDYYRHHLVDQHAETDMENAYGSTEGLLVGAIDAALVAENIAVTAEDMGYGIVFLGSLRNDVARVREILDLPDYVFPLFGMAVGEPAEDENGAAKPRLPFDHVFHHNKYHADKETQYAQMADYDQTISKYYDQRTNGNRKETWSQQIEMFLGNKARLDMLEQLQKSGLIQR</sequence>
<feature type="chain" id="PRO_0000239723" description="NADPH-dependent oxidoreductase">
    <location>
        <begin position="1"/>
        <end position="251"/>
    </location>
</feature>